<comment type="catalytic activity">
    <reaction>
        <text>L-arginine + H2O = L-citrulline + NH4(+)</text>
        <dbReference type="Rhea" id="RHEA:19597"/>
        <dbReference type="ChEBI" id="CHEBI:15377"/>
        <dbReference type="ChEBI" id="CHEBI:28938"/>
        <dbReference type="ChEBI" id="CHEBI:32682"/>
        <dbReference type="ChEBI" id="CHEBI:57743"/>
        <dbReference type="EC" id="3.5.3.6"/>
    </reaction>
</comment>
<comment type="pathway">
    <text>Amino-acid degradation; L-arginine degradation via ADI pathway; carbamoyl phosphate from L-arginine: step 1/2.</text>
</comment>
<comment type="subcellular location">
    <subcellularLocation>
        <location evidence="2">Cytoplasm</location>
    </subcellularLocation>
</comment>
<comment type="similarity">
    <text evidence="2">Belongs to the arginine deiminase family.</text>
</comment>
<evidence type="ECO:0000250" key="1"/>
<evidence type="ECO:0000305" key="2"/>
<feature type="chain" id="PRO_0000182215" description="Arginine deiminase">
    <location>
        <begin position="1"/>
        <end position="409"/>
    </location>
</feature>
<feature type="active site" description="Amidino-cysteine intermediate" evidence="1">
    <location>
        <position position="399"/>
    </location>
</feature>
<dbReference type="EC" id="3.5.3.6"/>
<dbReference type="EMBL" id="AJ001330">
    <property type="protein sequence ID" value="CAA04682.1"/>
    <property type="molecule type" value="Genomic_DNA"/>
</dbReference>
<dbReference type="PIR" id="T46741">
    <property type="entry name" value="T46741"/>
</dbReference>
<dbReference type="SMR" id="O53088"/>
<dbReference type="UniPathway" id="UPA00254">
    <property type="reaction ID" value="UER00364"/>
</dbReference>
<dbReference type="GO" id="GO:0005737">
    <property type="term" value="C:cytoplasm"/>
    <property type="evidence" value="ECO:0007669"/>
    <property type="project" value="UniProtKB-SubCell"/>
</dbReference>
<dbReference type="GO" id="GO:0016990">
    <property type="term" value="F:arginine deiminase activity"/>
    <property type="evidence" value="ECO:0007669"/>
    <property type="project" value="UniProtKB-UniRule"/>
</dbReference>
<dbReference type="GO" id="GO:0019547">
    <property type="term" value="P:arginine catabolic process to ornithine"/>
    <property type="evidence" value="ECO:0007669"/>
    <property type="project" value="UniProtKB-UniRule"/>
</dbReference>
<dbReference type="GO" id="GO:0019546">
    <property type="term" value="P:arginine deiminase pathway"/>
    <property type="evidence" value="ECO:0007669"/>
    <property type="project" value="TreeGrafter"/>
</dbReference>
<dbReference type="Gene3D" id="1.10.3930.10">
    <property type="entry name" value="Arginine deiminase"/>
    <property type="match status" value="1"/>
</dbReference>
<dbReference type="Gene3D" id="3.75.10.10">
    <property type="entry name" value="L-arginine/glycine Amidinotransferase, Chain A"/>
    <property type="match status" value="1"/>
</dbReference>
<dbReference type="HAMAP" id="MF_00242">
    <property type="entry name" value="Arg_deiminase"/>
    <property type="match status" value="1"/>
</dbReference>
<dbReference type="InterPro" id="IPR003876">
    <property type="entry name" value="Arg_deiminase"/>
</dbReference>
<dbReference type="NCBIfam" id="TIGR01078">
    <property type="entry name" value="arcA"/>
    <property type="match status" value="1"/>
</dbReference>
<dbReference type="NCBIfam" id="NF002381">
    <property type="entry name" value="PRK01388.1"/>
    <property type="match status" value="1"/>
</dbReference>
<dbReference type="PANTHER" id="PTHR47271">
    <property type="entry name" value="ARGININE DEIMINASE"/>
    <property type="match status" value="1"/>
</dbReference>
<dbReference type="PANTHER" id="PTHR47271:SF2">
    <property type="entry name" value="ARGININE DEIMINASE"/>
    <property type="match status" value="1"/>
</dbReference>
<dbReference type="Pfam" id="PF02274">
    <property type="entry name" value="ADI"/>
    <property type="match status" value="1"/>
</dbReference>
<dbReference type="PIRSF" id="PIRSF006356">
    <property type="entry name" value="Arg_deiminase"/>
    <property type="match status" value="1"/>
</dbReference>
<dbReference type="PRINTS" id="PR01466">
    <property type="entry name" value="ARGDEIMINASE"/>
</dbReference>
<dbReference type="SUPFAM" id="SSF55909">
    <property type="entry name" value="Pentein"/>
    <property type="match status" value="1"/>
</dbReference>
<protein>
    <recommendedName>
        <fullName>Arginine deiminase</fullName>
        <shortName>ADI</shortName>
        <ecNumber>3.5.3.6</ecNumber>
    </recommendedName>
    <alternativeName>
        <fullName>Arginine dihydrolase</fullName>
        <shortName>AD</shortName>
    </alternativeName>
</protein>
<accession>O53088</accession>
<name>ARCA_LATSK</name>
<keyword id="KW-0056">Arginine metabolism</keyword>
<keyword id="KW-0963">Cytoplasm</keyword>
<keyword id="KW-0378">Hydrolase</keyword>
<proteinExistence type="inferred from homology"/>
<sequence length="409" mass="45914">MTSPIHVNSEIGKLKTVLLKRPGKEVENITPDIMYRLLFDDIPYLPTIQKEHDQFAQTLRDNGVEVLYLENLAAEAIDAGDVKEAFLDKMLNESHIKSPQVQAALKDYLISMATLDMVEKIMAGVRTNEIDIKSKALIDVSADDDYPFYMDPMPNLYFTRDPAASMGDGLTINKMTFEARQRESMFMEVIMQHHPRFANQGAQVWRDRDHIDRMEGGDELILSDKVLAIGISQRTSAQSIEELAKVLFANHSGFEKILAIKIPHKHAMMHLDTVFTMIDYDKFTIHPGIQGAGGMVDTYILEPGNNDEIKITHQTDLEKVLRDALEVPELTLIPCGGGDAVVAPREQWNDGSNTLAIAPGVVVTYDRNYVSNENLRQYGIKVIEVPSSELSRGRGGPRCMSMPLVRRKT</sequence>
<organism>
    <name type="scientific">Latilactobacillus sakei</name>
    <name type="common">Lactobacillus sakei</name>
    <dbReference type="NCBI Taxonomy" id="1599"/>
    <lineage>
        <taxon>Bacteria</taxon>
        <taxon>Bacillati</taxon>
        <taxon>Bacillota</taxon>
        <taxon>Bacilli</taxon>
        <taxon>Lactobacillales</taxon>
        <taxon>Lactobacillaceae</taxon>
        <taxon>Latilactobacillus</taxon>
    </lineage>
</organism>
<reference key="1">
    <citation type="journal article" date="1998" name="J. Bacteriol.">
        <title>Structural and functional analysis of the gene cluster encoding the enzymes of the arginine deiminase pathway of Lactobacillus sakei.</title>
        <authorList>
            <person name="Zuniga M."/>
            <person name="Champomier-Verges M.-C."/>
            <person name="Zagorec M."/>
            <person name="Perez-Martinez G."/>
        </authorList>
    </citation>
    <scope>NUCLEOTIDE SEQUENCE [GENOMIC DNA]</scope>
</reference>
<gene>
    <name type="primary">arcA</name>
</gene>